<protein>
    <recommendedName>
        <fullName evidence="1">tRNA (guanine-N(1)-)-methyltransferase</fullName>
        <ecNumber evidence="1">2.1.1.228</ecNumber>
    </recommendedName>
    <alternativeName>
        <fullName evidence="1">M1G-methyltransferase</fullName>
    </alternativeName>
    <alternativeName>
        <fullName evidence="1">tRNA [GM37] methyltransferase</fullName>
    </alternativeName>
</protein>
<evidence type="ECO:0000255" key="1">
    <source>
        <dbReference type="HAMAP-Rule" id="MF_00605"/>
    </source>
</evidence>
<name>TRMD_NITOC</name>
<keyword id="KW-0963">Cytoplasm</keyword>
<keyword id="KW-0489">Methyltransferase</keyword>
<keyword id="KW-1185">Reference proteome</keyword>
<keyword id="KW-0949">S-adenosyl-L-methionine</keyword>
<keyword id="KW-0808">Transferase</keyword>
<keyword id="KW-0819">tRNA processing</keyword>
<sequence>MRFGVITLFPGMFDALWDSGVVGRALKQGKISLNFWNPRDFAHDRHRTVDARPYGGGPGMVMGIQPLRDAIHVGRAELGKGCRVLYLSPQGRRLDQAGLEALASNESLLFVAGRYEGVDERLIEMEVDEEWSIGDYVLSGGELAAMVIIDGLARLLPGVLGAAESAQQDSFVNGLLDCPHYTRPEVIEGYRVPPVLLSGDHKAIRRWRLKQALGRTWLKRPDLLSRRILDLEQQHLLAEFIREYQAEHREPR</sequence>
<feature type="chain" id="PRO_0000257441" description="tRNA (guanine-N(1)-)-methyltransferase">
    <location>
        <begin position="1"/>
        <end position="252"/>
    </location>
</feature>
<feature type="binding site" evidence="1">
    <location>
        <position position="113"/>
    </location>
    <ligand>
        <name>S-adenosyl-L-methionine</name>
        <dbReference type="ChEBI" id="CHEBI:59789"/>
    </ligand>
</feature>
<feature type="binding site" evidence="1">
    <location>
        <begin position="133"/>
        <end position="138"/>
    </location>
    <ligand>
        <name>S-adenosyl-L-methionine</name>
        <dbReference type="ChEBI" id="CHEBI:59789"/>
    </ligand>
</feature>
<comment type="function">
    <text evidence="1">Specifically methylates guanosine-37 in various tRNAs.</text>
</comment>
<comment type="catalytic activity">
    <reaction evidence="1">
        <text>guanosine(37) in tRNA + S-adenosyl-L-methionine = N(1)-methylguanosine(37) in tRNA + S-adenosyl-L-homocysteine + H(+)</text>
        <dbReference type="Rhea" id="RHEA:36899"/>
        <dbReference type="Rhea" id="RHEA-COMP:10145"/>
        <dbReference type="Rhea" id="RHEA-COMP:10147"/>
        <dbReference type="ChEBI" id="CHEBI:15378"/>
        <dbReference type="ChEBI" id="CHEBI:57856"/>
        <dbReference type="ChEBI" id="CHEBI:59789"/>
        <dbReference type="ChEBI" id="CHEBI:73542"/>
        <dbReference type="ChEBI" id="CHEBI:74269"/>
        <dbReference type="EC" id="2.1.1.228"/>
    </reaction>
</comment>
<comment type="subunit">
    <text evidence="1">Homodimer.</text>
</comment>
<comment type="subcellular location">
    <subcellularLocation>
        <location evidence="1">Cytoplasm</location>
    </subcellularLocation>
</comment>
<comment type="similarity">
    <text evidence="1">Belongs to the RNA methyltransferase TrmD family.</text>
</comment>
<organism>
    <name type="scientific">Nitrosococcus oceani (strain ATCC 19707 / BCRC 17464 / JCM 30415 / NCIMB 11848 / C-107)</name>
    <dbReference type="NCBI Taxonomy" id="323261"/>
    <lineage>
        <taxon>Bacteria</taxon>
        <taxon>Pseudomonadati</taxon>
        <taxon>Pseudomonadota</taxon>
        <taxon>Gammaproteobacteria</taxon>
        <taxon>Chromatiales</taxon>
        <taxon>Chromatiaceae</taxon>
        <taxon>Nitrosococcus</taxon>
    </lineage>
</organism>
<accession>Q3J8Y0</accession>
<gene>
    <name evidence="1" type="primary">trmD</name>
    <name type="ordered locus">Noc_2258</name>
</gene>
<reference key="1">
    <citation type="journal article" date="2006" name="Appl. Environ. Microbiol.">
        <title>Complete genome sequence of the marine, chemolithoautotrophic, ammonia-oxidizing bacterium Nitrosococcus oceani ATCC 19707.</title>
        <authorList>
            <person name="Klotz M.G."/>
            <person name="Arp D.J."/>
            <person name="Chain P.S.G."/>
            <person name="El-Sheikh A.F."/>
            <person name="Hauser L.J."/>
            <person name="Hommes N.G."/>
            <person name="Larimer F.W."/>
            <person name="Malfatti S.A."/>
            <person name="Norton J.M."/>
            <person name="Poret-Peterson A.T."/>
            <person name="Vergez L.M."/>
            <person name="Ward B.B."/>
        </authorList>
    </citation>
    <scope>NUCLEOTIDE SEQUENCE [LARGE SCALE GENOMIC DNA]</scope>
    <source>
        <strain>ATCC 19707 / BCRC 17464 / JCM 30415 / NCIMB 11848 / C-107</strain>
    </source>
</reference>
<dbReference type="EC" id="2.1.1.228" evidence="1"/>
<dbReference type="EMBL" id="CP000127">
    <property type="protein sequence ID" value="ABA58716.1"/>
    <property type="molecule type" value="Genomic_DNA"/>
</dbReference>
<dbReference type="RefSeq" id="WP_002809519.1">
    <property type="nucleotide sequence ID" value="NC_007484.1"/>
</dbReference>
<dbReference type="SMR" id="Q3J8Y0"/>
<dbReference type="FunCoup" id="Q3J8Y0">
    <property type="interactions" value="506"/>
</dbReference>
<dbReference type="STRING" id="323261.Noc_2258"/>
<dbReference type="KEGG" id="noc:Noc_2258"/>
<dbReference type="eggNOG" id="COG0336">
    <property type="taxonomic scope" value="Bacteria"/>
</dbReference>
<dbReference type="HOGENOM" id="CLU_047363_0_1_6"/>
<dbReference type="InParanoid" id="Q3J8Y0"/>
<dbReference type="Proteomes" id="UP000006838">
    <property type="component" value="Chromosome"/>
</dbReference>
<dbReference type="GO" id="GO:0005829">
    <property type="term" value="C:cytosol"/>
    <property type="evidence" value="ECO:0007669"/>
    <property type="project" value="TreeGrafter"/>
</dbReference>
<dbReference type="GO" id="GO:0052906">
    <property type="term" value="F:tRNA (guanine(37)-N1)-methyltransferase activity"/>
    <property type="evidence" value="ECO:0007669"/>
    <property type="project" value="UniProtKB-UniRule"/>
</dbReference>
<dbReference type="GO" id="GO:0002939">
    <property type="term" value="P:tRNA N1-guanine methylation"/>
    <property type="evidence" value="ECO:0007669"/>
    <property type="project" value="TreeGrafter"/>
</dbReference>
<dbReference type="CDD" id="cd18080">
    <property type="entry name" value="TrmD-like"/>
    <property type="match status" value="1"/>
</dbReference>
<dbReference type="FunFam" id="1.10.1270.20:FF:000001">
    <property type="entry name" value="tRNA (guanine-N(1)-)-methyltransferase"/>
    <property type="match status" value="1"/>
</dbReference>
<dbReference type="FunFam" id="3.40.1280.10:FF:000001">
    <property type="entry name" value="tRNA (guanine-N(1)-)-methyltransferase"/>
    <property type="match status" value="1"/>
</dbReference>
<dbReference type="Gene3D" id="3.40.1280.10">
    <property type="match status" value="1"/>
</dbReference>
<dbReference type="Gene3D" id="1.10.1270.20">
    <property type="entry name" value="tRNA(m1g37)methyltransferase, domain 2"/>
    <property type="match status" value="1"/>
</dbReference>
<dbReference type="HAMAP" id="MF_00605">
    <property type="entry name" value="TrmD"/>
    <property type="match status" value="1"/>
</dbReference>
<dbReference type="InterPro" id="IPR029028">
    <property type="entry name" value="Alpha/beta_knot_MTases"/>
</dbReference>
<dbReference type="InterPro" id="IPR023148">
    <property type="entry name" value="tRNA_m1G_MeTrfase_C_sf"/>
</dbReference>
<dbReference type="InterPro" id="IPR002649">
    <property type="entry name" value="tRNA_m1G_MeTrfase_TrmD"/>
</dbReference>
<dbReference type="InterPro" id="IPR029026">
    <property type="entry name" value="tRNA_m1G_MTases_N"/>
</dbReference>
<dbReference type="InterPro" id="IPR016009">
    <property type="entry name" value="tRNA_MeTrfase_TRMD/TRM10"/>
</dbReference>
<dbReference type="NCBIfam" id="NF000648">
    <property type="entry name" value="PRK00026.1"/>
    <property type="match status" value="1"/>
</dbReference>
<dbReference type="NCBIfam" id="TIGR00088">
    <property type="entry name" value="trmD"/>
    <property type="match status" value="1"/>
</dbReference>
<dbReference type="PANTHER" id="PTHR46417">
    <property type="entry name" value="TRNA (GUANINE-N(1)-)-METHYLTRANSFERASE"/>
    <property type="match status" value="1"/>
</dbReference>
<dbReference type="PANTHER" id="PTHR46417:SF1">
    <property type="entry name" value="TRNA (GUANINE-N(1)-)-METHYLTRANSFERASE"/>
    <property type="match status" value="1"/>
</dbReference>
<dbReference type="Pfam" id="PF01746">
    <property type="entry name" value="tRNA_m1G_MT"/>
    <property type="match status" value="1"/>
</dbReference>
<dbReference type="PIRSF" id="PIRSF000386">
    <property type="entry name" value="tRNA_mtase"/>
    <property type="match status" value="1"/>
</dbReference>
<dbReference type="SUPFAM" id="SSF75217">
    <property type="entry name" value="alpha/beta knot"/>
    <property type="match status" value="1"/>
</dbReference>
<proteinExistence type="inferred from homology"/>